<name>GSHR_BURCE</name>
<reference key="1">
    <citation type="journal article" date="1995" name="Appl. Environ. Microbiol.">
        <title>Sequence analysis of a gene cluster involved in metabolism of 2,4,5-trichlorophenoxyacetic acid by Burkholderia cepacia AC1100.</title>
        <authorList>
            <person name="Daubaras D.L."/>
            <person name="Hershberger C.D."/>
            <person name="Kitano K."/>
            <person name="Chakrabarty A.M."/>
        </authorList>
    </citation>
    <scope>NUCLEOTIDE SEQUENCE [GENOMIC DNA]</scope>
    <source>
        <strain>AC1100</strain>
    </source>
</reference>
<comment type="function">
    <text evidence="2">Catalyzes the reduction of glutathione disulfide (GSSG) to reduced glutathione (GSH). Constitutes the major mechanism to maintain a high GSH:GSSG ratio in the cytosol.</text>
</comment>
<comment type="catalytic activity">
    <reaction evidence="2">
        <text>2 glutathione + NADP(+) = glutathione disulfide + NADPH + H(+)</text>
        <dbReference type="Rhea" id="RHEA:11740"/>
        <dbReference type="ChEBI" id="CHEBI:15378"/>
        <dbReference type="ChEBI" id="CHEBI:57783"/>
        <dbReference type="ChEBI" id="CHEBI:57925"/>
        <dbReference type="ChEBI" id="CHEBI:58297"/>
        <dbReference type="ChEBI" id="CHEBI:58349"/>
        <dbReference type="EC" id="1.8.1.7"/>
    </reaction>
</comment>
<comment type="cofactor">
    <cofactor evidence="2">
        <name>FAD</name>
        <dbReference type="ChEBI" id="CHEBI:57692"/>
    </cofactor>
    <text evidence="2">Binds 1 FAD per subunit.</text>
</comment>
<comment type="pathway">
    <text>Xenobiotic degradation; (2,4,5-trichlorophenoxy)acetate degradation.</text>
</comment>
<comment type="subunit">
    <text evidence="2">Homodimer.</text>
</comment>
<comment type="subcellular location">
    <subcellularLocation>
        <location evidence="2">Cytoplasm</location>
    </subcellularLocation>
</comment>
<comment type="miscellaneous">
    <text evidence="2">The active site is a redox-active disulfide bond.</text>
</comment>
<comment type="similarity">
    <text evidence="3">Belongs to the class-I pyridine nucleotide-disulfide oxidoreductase family.</text>
</comment>
<proteinExistence type="inferred from homology"/>
<protein>
    <recommendedName>
        <fullName>Glutathione reductase</fullName>
        <shortName>GR</shortName>
        <shortName>GRase</shortName>
        <ecNumber>1.8.1.7</ecNumber>
    </recommendedName>
</protein>
<organism>
    <name type="scientific">Burkholderia cepacia</name>
    <name type="common">Pseudomonas cepacia</name>
    <dbReference type="NCBI Taxonomy" id="292"/>
    <lineage>
        <taxon>Bacteria</taxon>
        <taxon>Pseudomonadati</taxon>
        <taxon>Pseudomonadota</taxon>
        <taxon>Betaproteobacteria</taxon>
        <taxon>Burkholderiales</taxon>
        <taxon>Burkholderiaceae</taxon>
        <taxon>Burkholderia</taxon>
        <taxon>Burkholderia cepacia complex</taxon>
    </lineage>
</organism>
<sequence length="449" mass="47541">MQKYDFDLFVIGAGSGGVRAARIAAGHGAKVAIAEEYRFGGTCVIRGCVPKKLLMYASQYGQGFEDAAGFGWHSAATSHSWTSLIAAKDAEIARLEGVYQRLIENANVEIFKGRAQIAGPNRVTVTGASVSARTILIATGARPVMPPVAGANLMITSDDVFDLPVGPPRIAIIGGGYIACEFAGIFNGLGRHVVQLHRGSQVLRGFDDELREHLGDELKKSGIDLRLGVDVVAVERQRGALSVQLTTGDAMEVDAVMAATGRLPNTWGLGLETVDVGLDQNGAIKVDEYSRTSSPGIYAVGDVTNRLNLTPVAIHEGHAFADTVFGGKALPTEHENVPFAVFSQPQAASVGLSEAQARDRYSNVEIYGSAFRPMRAALSGRDEKALVKLVVNGSNDRVVGAHIVGADAAEIIQGIAVAIKARATKADFDATLGVHPTLAEEFVTLRNRR</sequence>
<gene>
    <name type="primary">gor</name>
</gene>
<dbReference type="EC" id="1.8.1.7"/>
<dbReference type="EMBL" id="U19883">
    <property type="protein sequence ID" value="AAC43334.1"/>
    <property type="molecule type" value="Genomic_DNA"/>
</dbReference>
<dbReference type="PIR" id="I40178">
    <property type="entry name" value="I40178"/>
</dbReference>
<dbReference type="SMR" id="P48639"/>
<dbReference type="UniPathway" id="UPA00686"/>
<dbReference type="GO" id="GO:0005829">
    <property type="term" value="C:cytosol"/>
    <property type="evidence" value="ECO:0007669"/>
    <property type="project" value="TreeGrafter"/>
</dbReference>
<dbReference type="GO" id="GO:0050660">
    <property type="term" value="F:flavin adenine dinucleotide binding"/>
    <property type="evidence" value="ECO:0007669"/>
    <property type="project" value="InterPro"/>
</dbReference>
<dbReference type="GO" id="GO:0004362">
    <property type="term" value="F:glutathione-disulfide reductase (NADPH) activity"/>
    <property type="evidence" value="ECO:0007669"/>
    <property type="project" value="UniProtKB-EC"/>
</dbReference>
<dbReference type="GO" id="GO:0050661">
    <property type="term" value="F:NADP binding"/>
    <property type="evidence" value="ECO:0007669"/>
    <property type="project" value="InterPro"/>
</dbReference>
<dbReference type="GO" id="GO:0046228">
    <property type="term" value="P:2,4,5-trichlorophenoxyacetic acid catabolic process"/>
    <property type="evidence" value="ECO:0007669"/>
    <property type="project" value="UniProtKB-UniPathway"/>
</dbReference>
<dbReference type="GO" id="GO:0045454">
    <property type="term" value="P:cell redox homeostasis"/>
    <property type="evidence" value="ECO:0007669"/>
    <property type="project" value="InterPro"/>
</dbReference>
<dbReference type="GO" id="GO:0034599">
    <property type="term" value="P:cellular response to oxidative stress"/>
    <property type="evidence" value="ECO:0007669"/>
    <property type="project" value="TreeGrafter"/>
</dbReference>
<dbReference type="GO" id="GO:0006749">
    <property type="term" value="P:glutathione metabolic process"/>
    <property type="evidence" value="ECO:0007669"/>
    <property type="project" value="InterPro"/>
</dbReference>
<dbReference type="Gene3D" id="3.30.390.30">
    <property type="match status" value="1"/>
</dbReference>
<dbReference type="Gene3D" id="3.50.50.60">
    <property type="entry name" value="FAD/NAD(P)-binding domain"/>
    <property type="match status" value="2"/>
</dbReference>
<dbReference type="InterPro" id="IPR036188">
    <property type="entry name" value="FAD/NAD-bd_sf"/>
</dbReference>
<dbReference type="InterPro" id="IPR023753">
    <property type="entry name" value="FAD/NAD-binding_dom"/>
</dbReference>
<dbReference type="InterPro" id="IPR016156">
    <property type="entry name" value="FAD/NAD-linked_Rdtase_dimer_sf"/>
</dbReference>
<dbReference type="InterPro" id="IPR006324">
    <property type="entry name" value="GSHR"/>
</dbReference>
<dbReference type="InterPro" id="IPR046952">
    <property type="entry name" value="GSHR/TRXR-like"/>
</dbReference>
<dbReference type="InterPro" id="IPR001100">
    <property type="entry name" value="Pyr_nuc-diS_OxRdtase"/>
</dbReference>
<dbReference type="InterPro" id="IPR004099">
    <property type="entry name" value="Pyr_nucl-diS_OxRdtase_dimer"/>
</dbReference>
<dbReference type="InterPro" id="IPR012999">
    <property type="entry name" value="Pyr_OxRdtase_I_AS"/>
</dbReference>
<dbReference type="NCBIfam" id="TIGR01424">
    <property type="entry name" value="gluta_reduc_2"/>
    <property type="match status" value="1"/>
</dbReference>
<dbReference type="NCBIfam" id="NF004776">
    <property type="entry name" value="PRK06116.1"/>
    <property type="match status" value="1"/>
</dbReference>
<dbReference type="PANTHER" id="PTHR42737">
    <property type="entry name" value="GLUTATHIONE REDUCTASE"/>
    <property type="match status" value="1"/>
</dbReference>
<dbReference type="PANTHER" id="PTHR42737:SF2">
    <property type="entry name" value="GLUTATHIONE REDUCTASE"/>
    <property type="match status" value="1"/>
</dbReference>
<dbReference type="Pfam" id="PF07992">
    <property type="entry name" value="Pyr_redox_2"/>
    <property type="match status" value="1"/>
</dbReference>
<dbReference type="Pfam" id="PF02852">
    <property type="entry name" value="Pyr_redox_dim"/>
    <property type="match status" value="1"/>
</dbReference>
<dbReference type="PIRSF" id="PIRSF000350">
    <property type="entry name" value="Mercury_reductase_MerA"/>
    <property type="match status" value="1"/>
</dbReference>
<dbReference type="PRINTS" id="PR00368">
    <property type="entry name" value="FADPNR"/>
</dbReference>
<dbReference type="PRINTS" id="PR00411">
    <property type="entry name" value="PNDRDTASEI"/>
</dbReference>
<dbReference type="SUPFAM" id="SSF51905">
    <property type="entry name" value="FAD/NAD(P)-binding domain"/>
    <property type="match status" value="1"/>
</dbReference>
<dbReference type="SUPFAM" id="SSF55424">
    <property type="entry name" value="FAD/NAD-linked reductases, dimerisation (C-terminal) domain"/>
    <property type="match status" value="1"/>
</dbReference>
<dbReference type="PROSITE" id="PS00076">
    <property type="entry name" value="PYRIDINE_REDOX_1"/>
    <property type="match status" value="1"/>
</dbReference>
<keyword id="KW-0963">Cytoplasm</keyword>
<keyword id="KW-1015">Disulfide bond</keyword>
<keyword id="KW-0274">FAD</keyword>
<keyword id="KW-0285">Flavoprotein</keyword>
<keyword id="KW-0521">NADP</keyword>
<keyword id="KW-0560">Oxidoreductase</keyword>
<keyword id="KW-0676">Redox-active center</keyword>
<feature type="chain" id="PRO_0000067974" description="Glutathione reductase">
    <location>
        <begin position="1"/>
        <end position="449"/>
    </location>
</feature>
<feature type="active site" description="Proton acceptor" evidence="2">
    <location>
        <position position="435"/>
    </location>
</feature>
<feature type="binding site" evidence="2">
    <location>
        <position position="15"/>
    </location>
    <ligand>
        <name>FAD</name>
        <dbReference type="ChEBI" id="CHEBI:57692"/>
    </ligand>
</feature>
<feature type="binding site" evidence="1">
    <location>
        <position position="15"/>
    </location>
    <ligand>
        <name>glutathione</name>
        <dbReference type="ChEBI" id="CHEBI:57925"/>
    </ligand>
</feature>
<feature type="binding site" evidence="2">
    <location>
        <position position="16"/>
    </location>
    <ligand>
        <name>FAD</name>
        <dbReference type="ChEBI" id="CHEBI:57692"/>
    </ligand>
</feature>
<feature type="binding site" evidence="2">
    <location>
        <position position="35"/>
    </location>
    <ligand>
        <name>FAD</name>
        <dbReference type="ChEBI" id="CHEBI:57692"/>
    </ligand>
</feature>
<feature type="binding site" evidence="2">
    <location>
        <position position="42"/>
    </location>
    <ligand>
        <name>FAD</name>
        <dbReference type="ChEBI" id="CHEBI:57692"/>
    </ligand>
</feature>
<feature type="binding site" evidence="2">
    <location>
        <position position="43"/>
    </location>
    <ligand>
        <name>FAD</name>
        <dbReference type="ChEBI" id="CHEBI:57692"/>
    </ligand>
</feature>
<feature type="binding site" evidence="2">
    <location>
        <position position="51"/>
    </location>
    <ligand>
        <name>FAD</name>
        <dbReference type="ChEBI" id="CHEBI:57692"/>
    </ligand>
</feature>
<feature type="binding site" evidence="1">
    <location>
        <position position="99"/>
    </location>
    <ligand>
        <name>glutathione</name>
        <dbReference type="ChEBI" id="CHEBI:57925"/>
    </ligand>
</feature>
<feature type="binding site" evidence="2">
    <location>
        <position position="115"/>
    </location>
    <ligand>
        <name>FAD</name>
        <dbReference type="ChEBI" id="CHEBI:57692"/>
    </ligand>
</feature>
<feature type="binding site" evidence="2">
    <location>
        <position position="175"/>
    </location>
    <ligand>
        <name>NADP(+)</name>
        <dbReference type="ChEBI" id="CHEBI:58349"/>
    </ligand>
</feature>
<feature type="binding site" evidence="2">
    <location>
        <position position="178"/>
    </location>
    <ligand>
        <name>NADP(+)</name>
        <dbReference type="ChEBI" id="CHEBI:58349"/>
    </ligand>
</feature>
<feature type="binding site" evidence="2">
    <location>
        <position position="181"/>
    </location>
    <ligand>
        <name>NADP(+)</name>
        <dbReference type="ChEBI" id="CHEBI:58349"/>
    </ligand>
</feature>
<feature type="binding site" evidence="2">
    <location>
        <position position="198"/>
    </location>
    <ligand>
        <name>NADP(+)</name>
        <dbReference type="ChEBI" id="CHEBI:58349"/>
    </ligand>
</feature>
<feature type="binding site" evidence="2">
    <location>
        <position position="204"/>
    </location>
    <ligand>
        <name>NADP(+)</name>
        <dbReference type="ChEBI" id="CHEBI:58349"/>
    </ligand>
</feature>
<feature type="binding site" evidence="2">
    <location>
        <position position="261"/>
    </location>
    <ligand>
        <name>NADP(+)</name>
        <dbReference type="ChEBI" id="CHEBI:58349"/>
    </ligand>
</feature>
<feature type="binding site" evidence="2">
    <location>
        <position position="302"/>
    </location>
    <ligand>
        <name>FAD</name>
        <dbReference type="ChEBI" id="CHEBI:57692"/>
    </ligand>
</feature>
<feature type="binding site" evidence="2">
    <location>
        <position position="310"/>
    </location>
    <ligand>
        <name>FAD</name>
        <dbReference type="ChEBI" id="CHEBI:57692"/>
    </ligand>
</feature>
<feature type="binding site" evidence="2">
    <location>
        <position position="340"/>
    </location>
    <ligand>
        <name>NADP(+)</name>
        <dbReference type="ChEBI" id="CHEBI:58349"/>
    </ligand>
</feature>
<feature type="binding site" evidence="2">
    <location>
        <position position="435"/>
    </location>
    <ligand>
        <name>FAD</name>
        <dbReference type="ChEBI" id="CHEBI:57692"/>
    </ligand>
</feature>
<feature type="disulfide bond" description="Redox-active" evidence="2">
    <location>
        <begin position="43"/>
        <end position="48"/>
    </location>
</feature>
<accession>P48639</accession>
<evidence type="ECO:0000250" key="1">
    <source>
        <dbReference type="UniProtKB" id="P00390"/>
    </source>
</evidence>
<evidence type="ECO:0000250" key="2">
    <source>
        <dbReference type="UniProtKB" id="P06715"/>
    </source>
</evidence>
<evidence type="ECO:0000305" key="3"/>